<sequence>MIWHVQNENFILDSTRIFMKAFHLLLFHGSFIFPECILIFGLILLLMIDSTSDQKDIPWLYFISSTSLVMSITALLFRWREEPMISFSGNFQTNNFNEIFQFLILLCSTLCIPLSVEYIECTEMAITEFLLFVLTATLGGMFLCGANDLITIFVAPECFSLCSYLLSGYTKRDVRSNEATTKYLLMGGASSSILVHGFSWLYGSSGGEIELQEIVNGLINTQMYNSPGISIALIFITVGIGFKLSPAPFHQWTPDVYEGSPTPVVAFLSVTSKVAASASATRIFDIPFYFSSNEWHLLLEILAILSMILGNLIAITQTSMKRMLAYSSIGQIGYVIIGIIVGDSNDGYASMITYMLFYISMNLGTFACIVLFGLRTGTDNIRDYAGLYTKDPFLALSSALCLLSLGGLPPLAGFFGKLYLFWCGWQAGLYFLVSIGLLMSVVSIYYYLKIIKLLMTGRNQEITPHMRNYRRYPLRSNNSIELSMILCVIASTIPGISMNPIIAIAQDTLF</sequence>
<accession>P0CD30</accession>
<accession>Q06GJ9</accession>
<geneLocation type="chloroplast"/>
<protein>
    <recommendedName>
        <fullName evidence="1">NAD(P)H-quinone oxidoreductase subunit 2 A, chloroplastic</fullName>
        <ecNumber evidence="1">7.1.1.-</ecNumber>
    </recommendedName>
    <alternativeName>
        <fullName evidence="1">NAD(P)H dehydrogenase, subunit 2 A</fullName>
    </alternativeName>
    <alternativeName>
        <fullName evidence="1">NADH-plastoquinone oxidoreductase subunit 2 A</fullName>
    </alternativeName>
</protein>
<gene>
    <name evidence="1" type="primary">ndhB1</name>
</gene>
<reference key="1">
    <citation type="journal article" date="2006" name="BMC Evol. Biol.">
        <title>Complete plastid genome sequences of Drimys, Liriodendron, and Piper: implications for the phylogenetic relationships of magnoliids.</title>
        <authorList>
            <person name="Cai Z."/>
            <person name="Penaflor C."/>
            <person name="Kuehl J.V."/>
            <person name="Leebens-Mack J."/>
            <person name="Carlson J.E."/>
            <person name="dePamphilis C.W."/>
            <person name="Boore J.L."/>
            <person name="Jansen R.K."/>
        </authorList>
    </citation>
    <scope>NUCLEOTIDE SEQUENCE [LARGE SCALE GENOMIC DNA]</scope>
</reference>
<feature type="chain" id="PRO_0000275605" description="NAD(P)H-quinone oxidoreductase subunit 2 A, chloroplastic">
    <location>
        <begin position="1"/>
        <end position="510"/>
    </location>
</feature>
<feature type="transmembrane region" description="Helical" evidence="1">
    <location>
        <begin position="24"/>
        <end position="44"/>
    </location>
</feature>
<feature type="transmembrane region" description="Helical" evidence="1">
    <location>
        <begin position="57"/>
        <end position="77"/>
    </location>
</feature>
<feature type="transmembrane region" description="Helical" evidence="1">
    <location>
        <begin position="99"/>
        <end position="119"/>
    </location>
</feature>
<feature type="transmembrane region" description="Helical" evidence="1">
    <location>
        <begin position="124"/>
        <end position="144"/>
    </location>
</feature>
<feature type="transmembrane region" description="Helical" evidence="1">
    <location>
        <begin position="149"/>
        <end position="169"/>
    </location>
</feature>
<feature type="transmembrane region" description="Helical" evidence="1">
    <location>
        <begin position="183"/>
        <end position="203"/>
    </location>
</feature>
<feature type="transmembrane region" description="Helical" evidence="1">
    <location>
        <begin position="229"/>
        <end position="249"/>
    </location>
</feature>
<feature type="transmembrane region" description="Helical" evidence="1">
    <location>
        <begin position="295"/>
        <end position="315"/>
    </location>
</feature>
<feature type="transmembrane region" description="Helical" evidence="1">
    <location>
        <begin position="323"/>
        <end position="343"/>
    </location>
</feature>
<feature type="transmembrane region" description="Helical" evidence="1">
    <location>
        <begin position="354"/>
        <end position="374"/>
    </location>
</feature>
<feature type="transmembrane region" description="Helical" evidence="1">
    <location>
        <begin position="395"/>
        <end position="415"/>
    </location>
</feature>
<feature type="transmembrane region" description="Helical" evidence="1">
    <location>
        <begin position="418"/>
        <end position="438"/>
    </location>
</feature>
<feature type="transmembrane region" description="Helical" evidence="1">
    <location>
        <begin position="484"/>
        <end position="504"/>
    </location>
</feature>
<proteinExistence type="inferred from homology"/>
<comment type="function">
    <text evidence="1">NDH shuttles electrons from NAD(P)H:plastoquinone, via FMN and iron-sulfur (Fe-S) centers, to quinones in the photosynthetic chain and possibly in a chloroplast respiratory chain. The immediate electron acceptor for the enzyme in this species is believed to be plastoquinone. Couples the redox reaction to proton translocation, and thus conserves the redox energy in a proton gradient.</text>
</comment>
<comment type="catalytic activity">
    <reaction evidence="1">
        <text>a plastoquinone + NADH + (n+1) H(+)(in) = a plastoquinol + NAD(+) + n H(+)(out)</text>
        <dbReference type="Rhea" id="RHEA:42608"/>
        <dbReference type="Rhea" id="RHEA-COMP:9561"/>
        <dbReference type="Rhea" id="RHEA-COMP:9562"/>
        <dbReference type="ChEBI" id="CHEBI:15378"/>
        <dbReference type="ChEBI" id="CHEBI:17757"/>
        <dbReference type="ChEBI" id="CHEBI:57540"/>
        <dbReference type="ChEBI" id="CHEBI:57945"/>
        <dbReference type="ChEBI" id="CHEBI:62192"/>
    </reaction>
</comment>
<comment type="catalytic activity">
    <reaction evidence="1">
        <text>a plastoquinone + NADPH + (n+1) H(+)(in) = a plastoquinol + NADP(+) + n H(+)(out)</text>
        <dbReference type="Rhea" id="RHEA:42612"/>
        <dbReference type="Rhea" id="RHEA-COMP:9561"/>
        <dbReference type="Rhea" id="RHEA-COMP:9562"/>
        <dbReference type="ChEBI" id="CHEBI:15378"/>
        <dbReference type="ChEBI" id="CHEBI:17757"/>
        <dbReference type="ChEBI" id="CHEBI:57783"/>
        <dbReference type="ChEBI" id="CHEBI:58349"/>
        <dbReference type="ChEBI" id="CHEBI:62192"/>
    </reaction>
</comment>
<comment type="subunit">
    <text evidence="1">NDH is composed of at least 16 different subunits, 5 of which are encoded in the nucleus.</text>
</comment>
<comment type="subcellular location">
    <subcellularLocation>
        <location evidence="1">Plastid</location>
        <location evidence="1">Chloroplast thylakoid membrane</location>
        <topology evidence="1">Multi-pass membrane protein</topology>
    </subcellularLocation>
</comment>
<comment type="similarity">
    <text evidence="1">Belongs to the complex I subunit 2 family.</text>
</comment>
<name>NU2C1_PIPCE</name>
<evidence type="ECO:0000255" key="1">
    <source>
        <dbReference type="HAMAP-Rule" id="MF_00445"/>
    </source>
</evidence>
<keyword id="KW-0150">Chloroplast</keyword>
<keyword id="KW-0472">Membrane</keyword>
<keyword id="KW-0520">NAD</keyword>
<keyword id="KW-0521">NADP</keyword>
<keyword id="KW-0934">Plastid</keyword>
<keyword id="KW-0618">Plastoquinone</keyword>
<keyword id="KW-0874">Quinone</keyword>
<keyword id="KW-0793">Thylakoid</keyword>
<keyword id="KW-1278">Translocase</keyword>
<keyword id="KW-0812">Transmembrane</keyword>
<keyword id="KW-1133">Transmembrane helix</keyword>
<keyword id="KW-0813">Transport</keyword>
<organism>
    <name type="scientific">Piper cenocladum</name>
    <name type="common">Ant piper</name>
    <dbReference type="NCBI Taxonomy" id="398741"/>
    <lineage>
        <taxon>Eukaryota</taxon>
        <taxon>Viridiplantae</taxon>
        <taxon>Streptophyta</taxon>
        <taxon>Embryophyta</taxon>
        <taxon>Tracheophyta</taxon>
        <taxon>Spermatophyta</taxon>
        <taxon>Magnoliopsida</taxon>
        <taxon>Magnoliidae</taxon>
        <taxon>Piperales</taxon>
        <taxon>Piperaceae</taxon>
        <taxon>Piper</taxon>
    </lineage>
</organism>
<dbReference type="EC" id="7.1.1.-" evidence="1"/>
<dbReference type="EMBL" id="DQ887677">
    <property type="protein sequence ID" value="ABI14517.1"/>
    <property type="molecule type" value="Genomic_DNA"/>
</dbReference>
<dbReference type="EMBL" id="DQ887677">
    <property type="protein sequence ID" value="ABI14532.1"/>
    <property type="molecule type" value="Genomic_DNA"/>
</dbReference>
<dbReference type="SMR" id="P0CD30"/>
<dbReference type="GO" id="GO:0009535">
    <property type="term" value="C:chloroplast thylakoid membrane"/>
    <property type="evidence" value="ECO:0007669"/>
    <property type="project" value="UniProtKB-SubCell"/>
</dbReference>
<dbReference type="GO" id="GO:0008137">
    <property type="term" value="F:NADH dehydrogenase (ubiquinone) activity"/>
    <property type="evidence" value="ECO:0007669"/>
    <property type="project" value="InterPro"/>
</dbReference>
<dbReference type="GO" id="GO:0048038">
    <property type="term" value="F:quinone binding"/>
    <property type="evidence" value="ECO:0007669"/>
    <property type="project" value="UniProtKB-KW"/>
</dbReference>
<dbReference type="GO" id="GO:0042773">
    <property type="term" value="P:ATP synthesis coupled electron transport"/>
    <property type="evidence" value="ECO:0007669"/>
    <property type="project" value="InterPro"/>
</dbReference>
<dbReference type="GO" id="GO:0019684">
    <property type="term" value="P:photosynthesis, light reaction"/>
    <property type="evidence" value="ECO:0007669"/>
    <property type="project" value="UniProtKB-UniRule"/>
</dbReference>
<dbReference type="HAMAP" id="MF_00445">
    <property type="entry name" value="NDH1_NuoN_1"/>
    <property type="match status" value="1"/>
</dbReference>
<dbReference type="InterPro" id="IPR010096">
    <property type="entry name" value="NADH-Q_OxRdtase_suN/2"/>
</dbReference>
<dbReference type="InterPro" id="IPR001750">
    <property type="entry name" value="ND/Mrp_TM"/>
</dbReference>
<dbReference type="InterPro" id="IPR045693">
    <property type="entry name" value="Ndh2_N"/>
</dbReference>
<dbReference type="NCBIfam" id="TIGR01770">
    <property type="entry name" value="NDH_I_N"/>
    <property type="match status" value="1"/>
</dbReference>
<dbReference type="NCBIfam" id="NF002701">
    <property type="entry name" value="PRK02504.1"/>
    <property type="match status" value="1"/>
</dbReference>
<dbReference type="PANTHER" id="PTHR22773">
    <property type="entry name" value="NADH DEHYDROGENASE"/>
    <property type="match status" value="1"/>
</dbReference>
<dbReference type="Pfam" id="PF19530">
    <property type="entry name" value="Ndh2_N"/>
    <property type="match status" value="1"/>
</dbReference>
<dbReference type="Pfam" id="PF00361">
    <property type="entry name" value="Proton_antipo_M"/>
    <property type="match status" value="1"/>
</dbReference>